<reference key="1">
    <citation type="journal article" date="1990" name="J. Gen. Virol.">
        <title>A comparison of the sequences of segment A of four infectious bursal disease virus strains and identification of a variable region in VP2.</title>
        <authorList>
            <person name="Bayliss C.D."/>
            <person name="Spies U."/>
            <person name="Shaw K."/>
            <person name="Peters R.W."/>
            <person name="Papageorgiou A."/>
            <person name="Mueller H."/>
            <person name="Boursnell M.E.G."/>
        </authorList>
    </citation>
    <scope>NUCLEOTIDE SEQUENCE [GENOMIC RNA]</scope>
</reference>
<proteinExistence type="inferred from homology"/>
<feature type="chain" id="PRO_0000221967" description="Protein VP5">
    <location>
        <begin position="1" status="less than"/>
        <end position="115"/>
    </location>
</feature>
<feature type="topological domain" description="Cytoplasmic" evidence="2">
    <location>
        <begin position="1"/>
        <end position="38"/>
    </location>
</feature>
<feature type="transmembrane region" description="Helical" evidence="2">
    <location>
        <begin position="39"/>
        <end position="56"/>
    </location>
</feature>
<feature type="topological domain" description="Extracellular" evidence="2">
    <location>
        <begin position="57"/>
        <end position="115"/>
    </location>
</feature>
<feature type="non-terminal residue">
    <location>
        <position position="1"/>
    </location>
</feature>
<protein>
    <recommendedName>
        <fullName>Protein VP5</fullName>
    </recommendedName>
</protein>
<organism>
    <name type="scientific">Avian infectious bursal disease virus (strain PBG-98)</name>
    <name type="common">IBDV</name>
    <name type="synonym">Gumboro disease virus</name>
    <dbReference type="NCBI Taxonomy" id="11000"/>
    <lineage>
        <taxon>Viruses</taxon>
        <taxon>Riboviria</taxon>
        <taxon>Orthornavirae</taxon>
        <taxon>Birnaviridae</taxon>
        <taxon>Avibirnavirus</taxon>
        <taxon>Avibirnavirus gumboroense</taxon>
    </lineage>
</organism>
<name>VP5_IBDVP</name>
<keyword id="KW-1043">Host membrane</keyword>
<keyword id="KW-0472">Membrane</keyword>
<keyword id="KW-0812">Transmembrane</keyword>
<keyword id="KW-1133">Transmembrane helix</keyword>
<organismHost>
    <name type="scientific">Gallus gallus</name>
    <name type="common">Chicken</name>
    <dbReference type="NCBI Taxonomy" id="9031"/>
</organismHost>
<organismHost>
    <name type="scientific">Meleagris gallopavo</name>
    <name type="common">Wild turkey</name>
    <dbReference type="NCBI Taxonomy" id="9103"/>
</organismHost>
<gene>
    <name type="primary">VP5</name>
</gene>
<sequence length="115" mass="13265">DANNRTGVHSGRHPGEAHSQVRDLDLQFDCGGHRVRANCLFPWIPWLNCGCSLHTAEQWELQVRSDAPDCPEPTGQLQLLQASESESHSEVKHTSWWRLCTKRHHKRRDLPRKPE</sequence>
<comment type="function">
    <text evidence="1">Plays a role in the release of virion progenies by disrupting the host plasma membrane.</text>
</comment>
<comment type="subcellular location">
    <subcellularLocation>
        <location>Host membrane</location>
        <topology>Single-pass membrane protein</topology>
    </subcellularLocation>
</comment>
<comment type="similarity">
    <text evidence="3">Belongs to the avibirnavirus/aquabirnavirus VP5 protein family.</text>
</comment>
<accession>P25222</accession>
<dbReference type="EMBL" id="D00868">
    <property type="protein sequence ID" value="BAA00742.1"/>
    <property type="molecule type" value="Genomic_RNA"/>
</dbReference>
<dbReference type="GO" id="GO:0033644">
    <property type="term" value="C:host cell membrane"/>
    <property type="evidence" value="ECO:0007669"/>
    <property type="project" value="UniProtKB-SubCell"/>
</dbReference>
<dbReference type="GO" id="GO:0016020">
    <property type="term" value="C:membrane"/>
    <property type="evidence" value="ECO:0007669"/>
    <property type="project" value="UniProtKB-KW"/>
</dbReference>
<dbReference type="InterPro" id="IPR004284">
    <property type="entry name" value="Birna_VP5"/>
</dbReference>
<dbReference type="Pfam" id="PF03042">
    <property type="entry name" value="Birna_VP5"/>
    <property type="match status" value="1"/>
</dbReference>
<evidence type="ECO:0000250" key="1"/>
<evidence type="ECO:0000255" key="2"/>
<evidence type="ECO:0000305" key="3"/>